<dbReference type="EC" id="2.7.7.77" evidence="1"/>
<dbReference type="EMBL" id="CP001176">
    <property type="protein sequence ID" value="ACK63379.1"/>
    <property type="molecule type" value="Genomic_DNA"/>
</dbReference>
<dbReference type="RefSeq" id="WP_000049595.1">
    <property type="nucleotide sequence ID" value="NC_011725.1"/>
</dbReference>
<dbReference type="SMR" id="B7H9C3"/>
<dbReference type="KEGG" id="bcb:BCB4264_A4873"/>
<dbReference type="HOGENOM" id="CLU_055597_2_0_9"/>
<dbReference type="Proteomes" id="UP000007096">
    <property type="component" value="Chromosome"/>
</dbReference>
<dbReference type="GO" id="GO:0005737">
    <property type="term" value="C:cytoplasm"/>
    <property type="evidence" value="ECO:0007669"/>
    <property type="project" value="UniProtKB-SubCell"/>
</dbReference>
<dbReference type="GO" id="GO:0005525">
    <property type="term" value="F:GTP binding"/>
    <property type="evidence" value="ECO:0007669"/>
    <property type="project" value="UniProtKB-UniRule"/>
</dbReference>
<dbReference type="GO" id="GO:0046872">
    <property type="term" value="F:metal ion binding"/>
    <property type="evidence" value="ECO:0007669"/>
    <property type="project" value="UniProtKB-KW"/>
</dbReference>
<dbReference type="GO" id="GO:0061603">
    <property type="term" value="F:molybdenum cofactor guanylyltransferase activity"/>
    <property type="evidence" value="ECO:0007669"/>
    <property type="project" value="UniProtKB-EC"/>
</dbReference>
<dbReference type="GO" id="GO:0006777">
    <property type="term" value="P:Mo-molybdopterin cofactor biosynthetic process"/>
    <property type="evidence" value="ECO:0007669"/>
    <property type="project" value="UniProtKB-KW"/>
</dbReference>
<dbReference type="CDD" id="cd02503">
    <property type="entry name" value="MobA"/>
    <property type="match status" value="1"/>
</dbReference>
<dbReference type="FunFam" id="3.90.550.10:FF:000121">
    <property type="entry name" value="Probable molybdenum cofactor guanylyltransferase"/>
    <property type="match status" value="1"/>
</dbReference>
<dbReference type="Gene3D" id="3.90.550.10">
    <property type="entry name" value="Spore Coat Polysaccharide Biosynthesis Protein SpsA, Chain A"/>
    <property type="match status" value="1"/>
</dbReference>
<dbReference type="HAMAP" id="MF_00316">
    <property type="entry name" value="MobA"/>
    <property type="match status" value="1"/>
</dbReference>
<dbReference type="InterPro" id="IPR025877">
    <property type="entry name" value="MobA-like_NTP_Trfase"/>
</dbReference>
<dbReference type="InterPro" id="IPR013482">
    <property type="entry name" value="Molybde_CF_guanTrfase"/>
</dbReference>
<dbReference type="InterPro" id="IPR029044">
    <property type="entry name" value="Nucleotide-diphossugar_trans"/>
</dbReference>
<dbReference type="PANTHER" id="PTHR19136">
    <property type="entry name" value="MOLYBDENUM COFACTOR GUANYLYLTRANSFERASE"/>
    <property type="match status" value="1"/>
</dbReference>
<dbReference type="PANTHER" id="PTHR19136:SF81">
    <property type="entry name" value="MOLYBDENUM COFACTOR GUANYLYLTRANSFERASE"/>
    <property type="match status" value="1"/>
</dbReference>
<dbReference type="Pfam" id="PF12804">
    <property type="entry name" value="NTP_transf_3"/>
    <property type="match status" value="1"/>
</dbReference>
<dbReference type="SUPFAM" id="SSF53448">
    <property type="entry name" value="Nucleotide-diphospho-sugar transferases"/>
    <property type="match status" value="1"/>
</dbReference>
<name>MOBA_BACC4</name>
<comment type="function">
    <text evidence="1">Transfers a GMP moiety from GTP to Mo-molybdopterin (Mo-MPT) cofactor (Moco or molybdenum cofactor) to form Mo-molybdopterin guanine dinucleotide (Mo-MGD) cofactor.</text>
</comment>
<comment type="catalytic activity">
    <reaction evidence="1">
        <text>Mo-molybdopterin + GTP + H(+) = Mo-molybdopterin guanine dinucleotide + diphosphate</text>
        <dbReference type="Rhea" id="RHEA:34243"/>
        <dbReference type="ChEBI" id="CHEBI:15378"/>
        <dbReference type="ChEBI" id="CHEBI:33019"/>
        <dbReference type="ChEBI" id="CHEBI:37565"/>
        <dbReference type="ChEBI" id="CHEBI:71302"/>
        <dbReference type="ChEBI" id="CHEBI:71310"/>
        <dbReference type="EC" id="2.7.7.77"/>
    </reaction>
</comment>
<comment type="cofactor">
    <cofactor evidence="1">
        <name>Mg(2+)</name>
        <dbReference type="ChEBI" id="CHEBI:18420"/>
    </cofactor>
</comment>
<comment type="subcellular location">
    <subcellularLocation>
        <location evidence="1">Cytoplasm</location>
    </subcellularLocation>
</comment>
<comment type="domain">
    <text evidence="1">The N-terminal domain determines nucleotide recognition and specific binding, while the C-terminal domain determines the specific binding to the target protein.</text>
</comment>
<comment type="similarity">
    <text evidence="1">Belongs to the MobA family.</text>
</comment>
<gene>
    <name evidence="1" type="primary">mobA</name>
    <name type="ordered locus">BCB4264_A4873</name>
</gene>
<proteinExistence type="inferred from homology"/>
<organism>
    <name type="scientific">Bacillus cereus (strain B4264)</name>
    <dbReference type="NCBI Taxonomy" id="405532"/>
    <lineage>
        <taxon>Bacteria</taxon>
        <taxon>Bacillati</taxon>
        <taxon>Bacillota</taxon>
        <taxon>Bacilli</taxon>
        <taxon>Bacillales</taxon>
        <taxon>Bacillaceae</taxon>
        <taxon>Bacillus</taxon>
        <taxon>Bacillus cereus group</taxon>
    </lineage>
</organism>
<accession>B7H9C3</accession>
<keyword id="KW-0963">Cytoplasm</keyword>
<keyword id="KW-0342">GTP-binding</keyword>
<keyword id="KW-0460">Magnesium</keyword>
<keyword id="KW-0479">Metal-binding</keyword>
<keyword id="KW-0501">Molybdenum cofactor biosynthesis</keyword>
<keyword id="KW-0547">Nucleotide-binding</keyword>
<keyword id="KW-0808">Transferase</keyword>
<protein>
    <recommendedName>
        <fullName evidence="1">Probable molybdenum cofactor guanylyltransferase</fullName>
        <shortName evidence="1">MoCo guanylyltransferase</shortName>
        <ecNumber evidence="1">2.7.7.77</ecNumber>
    </recommendedName>
    <alternativeName>
        <fullName evidence="1">GTP:molybdopterin guanylyltransferase</fullName>
    </alternativeName>
    <alternativeName>
        <fullName evidence="1">Mo-MPT guanylyltransferase</fullName>
    </alternativeName>
    <alternativeName>
        <fullName evidence="1">Molybdopterin guanylyltransferase</fullName>
    </alternativeName>
    <alternativeName>
        <fullName evidence="1">Molybdopterin-guanine dinucleotide synthase</fullName>
        <shortName evidence="1">MGD synthase</shortName>
    </alternativeName>
</protein>
<reference key="1">
    <citation type="submission" date="2008-10" db="EMBL/GenBank/DDBJ databases">
        <title>Genome sequence of Bacillus cereus B4264.</title>
        <authorList>
            <person name="Dodson R.J."/>
            <person name="Durkin A.S."/>
            <person name="Rosovitz M.J."/>
            <person name="Rasko D.A."/>
            <person name="Hoffmaster A."/>
            <person name="Ravel J."/>
            <person name="Sutton G."/>
        </authorList>
    </citation>
    <scope>NUCLEOTIDE SEQUENCE [LARGE SCALE GENOMIC DNA]</scope>
    <source>
        <strain>B4264</strain>
    </source>
</reference>
<sequence>MSKYAGIVLAGGMSSRFGEPKALAIWKGTTFVEHIVKVMGNTLQDIVVISHTDIKERVEQFVQVPVIEDIPHYKGNGPLAGIVSGMEYIEADWYAIMPCDAPNVSHEWFTILLEQTNNEYDAVVPIINGRKQPLLAAYHNRVKEKIYALLQEEKRSMGQLLSQCNVKYVSGEDVQANADWFINVNTKEEYGQAQKDLSNE</sequence>
<evidence type="ECO:0000255" key="1">
    <source>
        <dbReference type="HAMAP-Rule" id="MF_00316"/>
    </source>
</evidence>
<feature type="chain" id="PRO_1000119557" description="Probable molybdenum cofactor guanylyltransferase">
    <location>
        <begin position="1"/>
        <end position="200"/>
    </location>
</feature>
<feature type="binding site" evidence="1">
    <location>
        <begin position="9"/>
        <end position="11"/>
    </location>
    <ligand>
        <name>GTP</name>
        <dbReference type="ChEBI" id="CHEBI:37565"/>
    </ligand>
</feature>
<feature type="binding site" evidence="1">
    <location>
        <position position="21"/>
    </location>
    <ligand>
        <name>GTP</name>
        <dbReference type="ChEBI" id="CHEBI:37565"/>
    </ligand>
</feature>
<feature type="binding site" evidence="1">
    <location>
        <position position="69"/>
    </location>
    <ligand>
        <name>GTP</name>
        <dbReference type="ChEBI" id="CHEBI:37565"/>
    </ligand>
</feature>
<feature type="binding site" evidence="1">
    <location>
        <position position="100"/>
    </location>
    <ligand>
        <name>GTP</name>
        <dbReference type="ChEBI" id="CHEBI:37565"/>
    </ligand>
</feature>
<feature type="binding site" evidence="1">
    <location>
        <position position="100"/>
    </location>
    <ligand>
        <name>Mg(2+)</name>
        <dbReference type="ChEBI" id="CHEBI:18420"/>
    </ligand>
</feature>